<evidence type="ECO:0000255" key="1"/>
<evidence type="ECO:0000256" key="2">
    <source>
        <dbReference type="SAM" id="MobiDB-lite"/>
    </source>
</evidence>
<evidence type="ECO:0000269" key="3">
    <source>
    </source>
</evidence>
<evidence type="ECO:0000269" key="4">
    <source>
    </source>
</evidence>
<evidence type="ECO:0000269" key="5">
    <source>
    </source>
</evidence>
<evidence type="ECO:0000269" key="6">
    <source>
    </source>
</evidence>
<evidence type="ECO:0000269" key="7">
    <source>
    </source>
</evidence>
<evidence type="ECO:0000269" key="8">
    <source>
    </source>
</evidence>
<evidence type="ECO:0000303" key="9">
    <source>
    </source>
</evidence>
<evidence type="ECO:0000303" key="10">
    <source>
    </source>
</evidence>
<evidence type="ECO:0000303" key="11">
    <source ref="3"/>
</evidence>
<evidence type="ECO:0000305" key="12"/>
<evidence type="ECO:0000305" key="13">
    <source>
    </source>
</evidence>
<evidence type="ECO:0000312" key="14">
    <source>
        <dbReference type="HGNC" id="HGNC:21290"/>
    </source>
</evidence>
<evidence type="ECO:0007829" key="15">
    <source>
        <dbReference type="PDB" id="3OF6"/>
    </source>
</evidence>
<protein>
    <recommendedName>
        <fullName evidence="14">Pre T-cell antigen receptor alpha</fullName>
        <shortName evidence="9 10">pT-alpha</shortName>
        <shortName>pTa</shortName>
    </recommendedName>
    <alternativeName>
        <fullName>pT-alpha-TCR</fullName>
    </alternativeName>
</protein>
<accession>Q6ISU1</accession>
<accession>Q5TFZ7</accession>
<name>PTCRA_HUMAN</name>
<comment type="function">
    <text evidence="6">Component of the pre-T-cell receptor complex (composed of PTCRA, TCRB and the CD3 complex) that has a crucial role in early T-cell development, particularly alpha-beta T cell differentiation.</text>
</comment>
<comment type="subunit">
    <text evidence="4 5 8">Heterodimer with TCRB; disulfide linked. This heterodimer assembles with CD3 proteins into a signaling-competent pre-T-cell receptor complex. Interacts with RHBDD1 (PubMed:22795130).</text>
</comment>
<comment type="subcellular location">
    <subcellularLocation>
        <location evidence="12">Membrane</location>
        <topology evidence="12">Single-pass type I membrane protein</topology>
    </subcellularLocation>
    <subcellularLocation>
        <location evidence="6">Cell membrane</location>
    </subcellularLocation>
</comment>
<comment type="alternative products">
    <event type="alternative splicing"/>
    <isoform>
        <id>Q6ISU1-1</id>
        <name>1</name>
        <name>pTalpha-1</name>
        <sequence type="displayed"/>
    </isoform>
    <isoform>
        <id>Q6ISU1-2</id>
        <name>2</name>
        <name>pTalpha-2</name>
        <sequence type="described" ref="VSP_031445"/>
    </isoform>
    <isoform>
        <id>Q6ISU1-3</id>
        <name>3</name>
        <sequence type="described" ref="VSP_031446"/>
    </isoform>
</comment>
<comment type="tissue specificity">
    <text evidence="7 8">Expressed in immature but not mature T-cells. Also found in CD34+ cells from peripheral blood, CD34+ precursors from umbilical cord blood and adult bone marrow.</text>
</comment>
<comment type="developmental stage">
    <text evidence="8">Expressed in fetal life in CD34+ progenitors present in the liver at 18 weeks of gestation but is absent in CD34+ precursors from fetal bone marrow at any developmental stage up to 22 weeks.</text>
</comment>
<comment type="disease" evidence="6">
    <disease id="DI-06936">
        <name>Immunodeficiency 126</name>
        <acronym>IMD126</acronym>
        <description>An autosomal recessive immunologic disorder characterized by T-cell abnormalities with impaired development of alpha/beta T cells and increased susceptibility to recurrent infections. Disease severity is highly variable, ranging from life-threatening infections in infancy to severe infections, lymphoproliferation or autoimmunity beginning between the ages of 13 to 25 years. Some affected individuals may have very mild disease or be asymptomatic.</description>
        <dbReference type="MIM" id="620931"/>
    </disease>
    <text>Disease susceptibility is associated with variants affecting the gene represented in this entry.</text>
</comment>
<gene>
    <name evidence="14" type="primary">PTCRA</name>
</gene>
<dbReference type="EMBL" id="U36759">
    <property type="protein sequence ID" value="AAB06194.1"/>
    <property type="molecule type" value="mRNA"/>
</dbReference>
<dbReference type="EMBL" id="AF084941">
    <property type="protein sequence ID" value="AAC83346.1"/>
    <property type="molecule type" value="Genomic_DNA"/>
</dbReference>
<dbReference type="EMBL" id="AF101436">
    <property type="protein sequence ID" value="AAF21890.1"/>
    <property type="molecule type" value="mRNA"/>
</dbReference>
<dbReference type="EMBL" id="AF165312">
    <property type="protein sequence ID" value="AAF89556.1"/>
    <property type="molecule type" value="mRNA"/>
</dbReference>
<dbReference type="EMBL" id="AL035587">
    <property type="status" value="NOT_ANNOTATED_CDS"/>
    <property type="molecule type" value="Genomic_DNA"/>
</dbReference>
<dbReference type="EMBL" id="BC069336">
    <property type="protein sequence ID" value="AAH69336.1"/>
    <property type="molecule type" value="mRNA"/>
</dbReference>
<dbReference type="EMBL" id="BC100771">
    <property type="protein sequence ID" value="AAI00772.1"/>
    <property type="molecule type" value="mRNA"/>
</dbReference>
<dbReference type="EMBL" id="BC100772">
    <property type="protein sequence ID" value="AAI00773.1"/>
    <property type="molecule type" value="mRNA"/>
</dbReference>
<dbReference type="EMBL" id="BC100773">
    <property type="protein sequence ID" value="AAI00774.1"/>
    <property type="molecule type" value="mRNA"/>
</dbReference>
<dbReference type="EMBL" id="BC100774">
    <property type="protein sequence ID" value="AAI00775.1"/>
    <property type="molecule type" value="mRNA"/>
</dbReference>
<dbReference type="EMBL" id="BC153829">
    <property type="protein sequence ID" value="AAI53830.1"/>
    <property type="molecule type" value="mRNA"/>
</dbReference>
<dbReference type="EMBL" id="U38996">
    <property type="protein sequence ID" value="AAB18373.1"/>
    <property type="molecule type" value="mRNA"/>
</dbReference>
<dbReference type="CCDS" id="CCDS4874.1">
    <molecule id="Q6ISU1-1"/>
</dbReference>
<dbReference type="CCDS" id="CCDS59019.1">
    <molecule id="Q6ISU1-3"/>
</dbReference>
<dbReference type="CCDS" id="CCDS59020.1">
    <molecule id="Q6ISU1-2"/>
</dbReference>
<dbReference type="RefSeq" id="NP_001230097.1">
    <property type="nucleotide sequence ID" value="NM_001243168.1"/>
</dbReference>
<dbReference type="RefSeq" id="NP_001230098.1">
    <molecule id="Q6ISU1-3"/>
    <property type="nucleotide sequence ID" value="NM_001243169.2"/>
</dbReference>
<dbReference type="RefSeq" id="NP_001230099.1">
    <molecule id="Q6ISU1-2"/>
    <property type="nucleotide sequence ID" value="NM_001243170.2"/>
</dbReference>
<dbReference type="RefSeq" id="NP_612153.2">
    <molecule id="Q6ISU1-1"/>
    <property type="nucleotide sequence ID" value="NM_138296.3"/>
</dbReference>
<dbReference type="PDB" id="3OF6">
    <property type="method" value="X-ray"/>
    <property type="resolution" value="2.80 A"/>
    <property type="chains" value="D/E/F=17-135"/>
</dbReference>
<dbReference type="PDBsum" id="3OF6"/>
<dbReference type="SMR" id="Q6ISU1"/>
<dbReference type="BioGRID" id="128144">
    <property type="interactions" value="24"/>
</dbReference>
<dbReference type="FunCoup" id="Q6ISU1">
    <property type="interactions" value="60"/>
</dbReference>
<dbReference type="IntAct" id="Q6ISU1">
    <property type="interactions" value="4"/>
</dbReference>
<dbReference type="MINT" id="Q6ISU1"/>
<dbReference type="STRING" id="9606.ENSP00000477815"/>
<dbReference type="GlyCosmos" id="Q6ISU1">
    <property type="glycosylation" value="1 site, No reported glycans"/>
</dbReference>
<dbReference type="GlyGen" id="Q6ISU1">
    <property type="glycosylation" value="1 site"/>
</dbReference>
<dbReference type="iPTMnet" id="Q6ISU1"/>
<dbReference type="PhosphoSitePlus" id="Q6ISU1"/>
<dbReference type="BioMuta" id="PTCRA"/>
<dbReference type="DMDM" id="74736631"/>
<dbReference type="PaxDb" id="9606-ENSP00000477815"/>
<dbReference type="PeptideAtlas" id="Q6ISU1"/>
<dbReference type="Antibodypedia" id="57244">
    <property type="antibodies" value="118 antibodies from 22 providers"/>
</dbReference>
<dbReference type="DNASU" id="171558"/>
<dbReference type="Ensembl" id="ENST00000304672.6">
    <molecule id="Q6ISU1-1"/>
    <property type="protein sequence ID" value="ENSP00000304447.2"/>
    <property type="gene ID" value="ENSG00000171611.10"/>
</dbReference>
<dbReference type="Ensembl" id="ENST00000441198.4">
    <molecule id="Q6ISU1-3"/>
    <property type="protein sequence ID" value="ENSP00000409550.1"/>
    <property type="gene ID" value="ENSG00000171611.10"/>
</dbReference>
<dbReference type="Ensembl" id="ENST00000446507.5">
    <molecule id="Q6ISU1-2"/>
    <property type="protein sequence ID" value="ENSP00000392288.1"/>
    <property type="gene ID" value="ENSG00000171611.10"/>
</dbReference>
<dbReference type="GeneID" id="171558"/>
<dbReference type="KEGG" id="hsa:171558"/>
<dbReference type="MANE-Select" id="ENST00000304672.6">
    <property type="protein sequence ID" value="ENSP00000304447.2"/>
    <property type="RefSeq nucleotide sequence ID" value="NM_138296.3"/>
    <property type="RefSeq protein sequence ID" value="NP_612153.2"/>
</dbReference>
<dbReference type="UCSC" id="uc003osx.4">
    <molecule id="Q6ISU1-1"/>
    <property type="organism name" value="human"/>
</dbReference>
<dbReference type="AGR" id="HGNC:21290"/>
<dbReference type="CTD" id="171558"/>
<dbReference type="DisGeNET" id="171558"/>
<dbReference type="GeneCards" id="PTCRA"/>
<dbReference type="HGNC" id="HGNC:21290">
    <property type="gene designation" value="PTCRA"/>
</dbReference>
<dbReference type="HPA" id="ENSG00000171611">
    <property type="expression patterns" value="Tissue enriched (lymphoid)"/>
</dbReference>
<dbReference type="MalaCards" id="PTCRA"/>
<dbReference type="MIM" id="606817">
    <property type="type" value="gene"/>
</dbReference>
<dbReference type="MIM" id="620931">
    <property type="type" value="phenotype"/>
</dbReference>
<dbReference type="neXtProt" id="NX_Q6ISU1"/>
<dbReference type="OpenTargets" id="ENSG00000171611"/>
<dbReference type="PharmGKB" id="PA134993184"/>
<dbReference type="VEuPathDB" id="HostDB:ENSG00000171611"/>
<dbReference type="eggNOG" id="ENOG502SAGI">
    <property type="taxonomic scope" value="Eukaryota"/>
</dbReference>
<dbReference type="GeneTree" id="ENSGT00390000007712"/>
<dbReference type="HOGENOM" id="CLU_082600_0_0_1"/>
<dbReference type="InParanoid" id="Q6ISU1"/>
<dbReference type="OrthoDB" id="8930604at2759"/>
<dbReference type="PAN-GO" id="Q6ISU1">
    <property type="GO annotations" value="1 GO annotation based on evolutionary models"/>
</dbReference>
<dbReference type="PhylomeDB" id="Q6ISU1"/>
<dbReference type="TreeFam" id="TF337868"/>
<dbReference type="PathwayCommons" id="Q6ISU1"/>
<dbReference type="Reactome" id="R-HSA-9013508">
    <property type="pathway name" value="NOTCH3 Intracellular Domain Regulates Transcription"/>
</dbReference>
<dbReference type="SignaLink" id="Q6ISU1"/>
<dbReference type="SIGNOR" id="Q6ISU1"/>
<dbReference type="BioGRID-ORCS" id="171558">
    <property type="hits" value="11 hits in 1146 CRISPR screens"/>
</dbReference>
<dbReference type="EvolutionaryTrace" id="Q6ISU1"/>
<dbReference type="GenomeRNAi" id="171558"/>
<dbReference type="Pharos" id="Q6ISU1">
    <property type="development level" value="Tbio"/>
</dbReference>
<dbReference type="PRO" id="PR:Q6ISU1"/>
<dbReference type="Proteomes" id="UP000005640">
    <property type="component" value="Chromosome 6"/>
</dbReference>
<dbReference type="RNAct" id="Q6ISU1">
    <property type="molecule type" value="protein"/>
</dbReference>
<dbReference type="Bgee" id="ENSG00000171611">
    <property type="expression patterns" value="Expressed in olfactory bulb and 146 other cell types or tissues"/>
</dbReference>
<dbReference type="ExpressionAtlas" id="Q6ISU1">
    <property type="expression patterns" value="baseline and differential"/>
</dbReference>
<dbReference type="GO" id="GO:0005886">
    <property type="term" value="C:plasma membrane"/>
    <property type="evidence" value="ECO:0000314"/>
    <property type="project" value="UniProtKB"/>
</dbReference>
<dbReference type="GO" id="GO:0046632">
    <property type="term" value="P:alpha-beta T cell differentiation"/>
    <property type="evidence" value="ECO:0000315"/>
    <property type="project" value="UniProtKB"/>
</dbReference>
<dbReference type="GO" id="GO:0070244">
    <property type="term" value="P:negative regulation of thymocyte apoptotic process"/>
    <property type="evidence" value="ECO:0000318"/>
    <property type="project" value="GO_Central"/>
</dbReference>
<dbReference type="FunFam" id="2.60.40.10:FF:001091">
    <property type="entry name" value="Pre T-cell antigen receptor alpha"/>
    <property type="match status" value="1"/>
</dbReference>
<dbReference type="Gene3D" id="2.60.40.10">
    <property type="entry name" value="Immunoglobulins"/>
    <property type="match status" value="1"/>
</dbReference>
<dbReference type="InterPro" id="IPR036179">
    <property type="entry name" value="Ig-like_dom_sf"/>
</dbReference>
<dbReference type="InterPro" id="IPR013783">
    <property type="entry name" value="Ig-like_fold"/>
</dbReference>
<dbReference type="InterPro" id="IPR027834">
    <property type="entry name" value="PTCRA"/>
</dbReference>
<dbReference type="PANTHER" id="PTHR37866">
    <property type="entry name" value="PRE T-CELL ANTIGEN RECEPTOR ALPHA"/>
    <property type="match status" value="1"/>
</dbReference>
<dbReference type="PANTHER" id="PTHR37866:SF1">
    <property type="entry name" value="PRE T-CELL ANTIGEN RECEPTOR ALPHA"/>
    <property type="match status" value="1"/>
</dbReference>
<dbReference type="Pfam" id="PF15028">
    <property type="entry name" value="PTCRA"/>
    <property type="match status" value="1"/>
</dbReference>
<dbReference type="SUPFAM" id="SSF48726">
    <property type="entry name" value="Immunoglobulin"/>
    <property type="match status" value="1"/>
</dbReference>
<organism>
    <name type="scientific">Homo sapiens</name>
    <name type="common">Human</name>
    <dbReference type="NCBI Taxonomy" id="9606"/>
    <lineage>
        <taxon>Eukaryota</taxon>
        <taxon>Metazoa</taxon>
        <taxon>Chordata</taxon>
        <taxon>Craniata</taxon>
        <taxon>Vertebrata</taxon>
        <taxon>Euteleostomi</taxon>
        <taxon>Mammalia</taxon>
        <taxon>Eutheria</taxon>
        <taxon>Euarchontoglires</taxon>
        <taxon>Primates</taxon>
        <taxon>Haplorrhini</taxon>
        <taxon>Catarrhini</taxon>
        <taxon>Hominidae</taxon>
        <taxon>Homo</taxon>
    </lineage>
</organism>
<keyword id="KW-0002">3D-structure</keyword>
<keyword id="KW-0025">Alternative splicing</keyword>
<keyword id="KW-1003">Cell membrane</keyword>
<keyword id="KW-1015">Disulfide bond</keyword>
<keyword id="KW-0325">Glycoprotein</keyword>
<keyword id="KW-0472">Membrane</keyword>
<keyword id="KW-0675">Receptor</keyword>
<keyword id="KW-1185">Reference proteome</keyword>
<keyword id="KW-0732">Signal</keyword>
<keyword id="KW-0812">Transmembrane</keyword>
<keyword id="KW-1133">Transmembrane helix</keyword>
<feature type="signal peptide" evidence="1">
    <location>
        <begin position="1"/>
        <end position="23"/>
    </location>
</feature>
<feature type="chain" id="PRO_0000319108" description="Pre T-cell antigen receptor alpha">
    <location>
        <begin position="24"/>
        <end position="281"/>
    </location>
</feature>
<feature type="topological domain" description="Extracellular" evidence="1">
    <location>
        <begin position="24"/>
        <end position="146"/>
    </location>
</feature>
<feature type="transmembrane region" description="Helical" evidence="1">
    <location>
        <begin position="147"/>
        <end position="167"/>
    </location>
</feature>
<feature type="topological domain" description="Cytoplasmic" evidence="1">
    <location>
        <begin position="168"/>
        <end position="281"/>
    </location>
</feature>
<feature type="region of interest" description="Disordered" evidence="2">
    <location>
        <begin position="196"/>
        <end position="233"/>
    </location>
</feature>
<feature type="glycosylation site" description="N-linked (GlcNAc...) asparagine" evidence="4">
    <location>
        <position position="67"/>
    </location>
</feature>
<feature type="disulfide bond" evidence="4">
    <location>
        <begin position="47"/>
        <end position="107"/>
    </location>
</feature>
<feature type="disulfide bond" description="Interchain (with TCRB)" evidence="13">
    <location>
        <position position="135"/>
    </location>
</feature>
<feature type="splice variant" id="VSP_031445" description="In isoform 2." evidence="11">
    <location>
        <begin position="20"/>
        <end position="126"/>
    </location>
</feature>
<feature type="splice variant" id="VSP_031446" description="In isoform 3." evidence="11">
    <original>VGGTPFPSLAPPIMLLVDGKQQMVVVCLVLDVAPPGLDS</original>
    <variation>PVSFPSSPEAATTG</variation>
    <location>
        <begin position="21"/>
        <end position="59"/>
    </location>
</feature>
<feature type="sequence variant" id="VAR_090013" description="Risk factor for IMD126; loss of expression of pre-T-cell receptor complex at the cell surface." evidence="6">
    <location>
        <begin position="14"/>
        <end position="281"/>
    </location>
</feature>
<feature type="sequence variant" id="VAR_090014" description="The underlying nucleotide substitution affects splicing; does not affect expression of pre-T-cell receptor complex at the cell surface; dbSNP:rs768315052." evidence="6">
    <original>G</original>
    <variation>R</variation>
    <location>
        <position position="20"/>
    </location>
</feature>
<feature type="sequence variant" id="VAR_090015" description="Risk factor for autoimmunity at homozygosity; decreased expression of pre-T-cell receptor complex at the cell surface; dbSNP:rs200942121." evidence="6">
    <original>D</original>
    <variation>A</variation>
    <location>
        <position position="51"/>
    </location>
</feature>
<feature type="sequence variant" id="VAR_090016" description="Decreased expression of pre-T-cell receptor complex at the cell surface; dbSNP:rs141630791." evidence="6">
    <original>Y</original>
    <variation>C</variation>
    <location>
        <position position="76"/>
    </location>
</feature>
<feature type="sequence variant" id="VAR_038957" description="Does not affect expression of pre-T-cell receptor complex at the cell surface; dbSNP:rs9471966." evidence="3 6">
    <original>V</original>
    <variation>I</variation>
    <location>
        <position position="106"/>
    </location>
</feature>
<feature type="sequence variant" id="VAR_090017" description="Does not affect expression of pre-T-cell receptor complex at the cell surface; dbSNP:rs141979329." evidence="6">
    <original>H</original>
    <variation>L</variation>
    <location>
        <position position="124"/>
    </location>
</feature>
<feature type="sequence variant" id="VAR_090018" description="Risk factor for IMD126; loss of expression of pre-T-cell receptor complex at the cell surface." evidence="6">
    <location>
        <begin position="149"/>
        <end position="281"/>
    </location>
</feature>
<feature type="sequence variant" id="VAR_038958" description="Does not affect expression of pre-T-cell receptor complex at the cell surface; dbSNP:rs36111725." evidence="6">
    <original>A</original>
    <variation>T</variation>
    <location>
        <position position="183"/>
    </location>
</feature>
<feature type="sequence variant" id="VAR_090019" description="Does not affect expression of pre-T-cell receptor complex at the cell surface; dbSNP:rs111782749." evidence="6">
    <original>R</original>
    <variation>Q</variation>
    <location>
        <position position="189"/>
    </location>
</feature>
<feature type="sequence variant" id="VAR_090020" description="Does not affect expression of pre-T-cell receptor complex at the cell surface; dbSNP:rs373866603." evidence="6">
    <original>G</original>
    <variation>S</variation>
    <location>
        <position position="192"/>
    </location>
</feature>
<feature type="sequence variant" id="VAR_090021" description="Does not affect expression of pre-T-cell receptor complex at the cell surface; dbSNP:rs146531157." evidence="6">
    <original>R</original>
    <variation>Q</variation>
    <location>
        <position position="227"/>
    </location>
</feature>
<feature type="sequence variant" id="VAR_090022" description="Does not affect expression of pre-T-cell receptor complex at the cell surface; dbSNP:rs200924110." evidence="6">
    <original>G</original>
    <variation>E</variation>
    <location>
        <position position="230"/>
    </location>
</feature>
<feature type="sequence variant" id="VAR_090023" description="Does not affect expression of pre-T-cell receptor complex at the cell surface; dbSNP:rs115331994." evidence="6">
    <original>C</original>
    <variation>R</variation>
    <location>
        <position position="252"/>
    </location>
</feature>
<feature type="sequence variant" id="VAR_090024" description="Does not affect expression of pre-T-cell receptor complex at the cell surface; dbSNP:rs61743125." evidence="6">
    <original>A</original>
    <variation>T</variation>
    <location>
        <position position="281"/>
    </location>
</feature>
<feature type="sequence conflict" description="In Ref. 1; AAB06194, 2; AAC83346, 3; AAF89556 and 6; AAB18373." evidence="12" ref="1 2 3 6">
    <original>A</original>
    <variation>R</variation>
    <location>
        <position position="256"/>
    </location>
</feature>
<feature type="sequence conflict" description="In Ref. 1; AAB06194." evidence="12" ref="1">
    <original>A</original>
    <variation>R</variation>
    <location>
        <position position="269"/>
    </location>
</feature>
<feature type="strand" evidence="15">
    <location>
        <begin position="33"/>
        <end position="52"/>
    </location>
</feature>
<feature type="strand" evidence="15">
    <location>
        <begin position="62"/>
        <end position="64"/>
    </location>
</feature>
<feature type="strand" evidence="15">
    <location>
        <begin position="66"/>
        <end position="68"/>
    </location>
</feature>
<feature type="strand" evidence="15">
    <location>
        <begin position="79"/>
        <end position="81"/>
    </location>
</feature>
<feature type="turn" evidence="15">
    <location>
        <begin position="82"/>
        <end position="84"/>
    </location>
</feature>
<feature type="strand" evidence="15">
    <location>
        <begin position="85"/>
        <end position="95"/>
    </location>
</feature>
<feature type="helix" evidence="15">
    <location>
        <begin position="96"/>
        <end position="100"/>
    </location>
</feature>
<feature type="strand" evidence="15">
    <location>
        <begin position="104"/>
        <end position="109"/>
    </location>
</feature>
<sequence>MAGTWLLLLLALGCPALPTGVGGTPFPSLAPPIMLLVDGKQQMVVVCLVLDVAPPGLDSPIWFSAGNGSALDAFTYGPSPATDGTWTNLAHLSLPSEELASWEPLVCHTGPGAEGHSRSTQPMHLSGEASTARTCPQEPLRGTPGGALWLGVLRLLLFKLLLFDLLLTCSCLCDPAGPLPSPATTTRLRALGSHRLHPATETGGREATSSPRPQPRDRRWGDTPPGRKPGSPVWGEGSYLSSYPTCPAQAWCSRSALRAPSSSLGAFFAGDLPPPLQAGAA</sequence>
<proteinExistence type="evidence at protein level"/>
<reference key="1">
    <citation type="journal article" date="1995" name="Proc. Natl. Acad. Sci. U.S.A.">
        <title>Cloning and comparative analysis of the human pre-T-cell receptor alpha-chain gene.</title>
        <authorList>
            <person name="Del Porto P."/>
            <person name="Bruno L."/>
            <person name="Mattei M.-G."/>
            <person name="von Boehmer H."/>
            <person name="Saint-Ruf C."/>
        </authorList>
    </citation>
    <scope>NUCLEOTIDE SEQUENCE [MRNA] (ISOFORM 1)</scope>
    <scope>TISSUE SPECIFICITY</scope>
    <source>
        <tissue>Thymus</tissue>
    </source>
</reference>
<reference key="2">
    <citation type="journal article" date="1998" name="Eur. J. Immunol.">
        <title>Genomic structure of the human pre-T cell receptor alpha chain and expression of two mRNA isoforms.</title>
        <authorList>
            <person name="Saint-Ruf C."/>
            <person name="Lechner O."/>
            <person name="Feinberg J."/>
            <person name="von Boehmer H."/>
        </authorList>
    </citation>
    <scope>NUCLEOTIDE SEQUENCE [GENOMIC DNA] (ISOFORMS 1 AND 2)</scope>
    <source>
        <tissue>Lymphoblast</tissue>
    </source>
</reference>
<reference key="3">
    <citation type="submission" date="1998-10" db="EMBL/GenBank/DDBJ databases">
        <title>Alternatively spliced human pre-T alpha chain, mRNA.</title>
        <authorList>
            <person name="Ramiro A.R."/>
            <person name="Toribio M.L."/>
        </authorList>
    </citation>
    <scope>NUCLEOTIDE SEQUENCE [MRNA] (ISOFORMS 2 AND 3)</scope>
</reference>
<reference key="4">
    <citation type="journal article" date="2003" name="Nature">
        <title>The DNA sequence and analysis of human chromosome 6.</title>
        <authorList>
            <person name="Mungall A.J."/>
            <person name="Palmer S.A."/>
            <person name="Sims S.K."/>
            <person name="Edwards C.A."/>
            <person name="Ashurst J.L."/>
            <person name="Wilming L."/>
            <person name="Jones M.C."/>
            <person name="Horton R."/>
            <person name="Hunt S.E."/>
            <person name="Scott C.E."/>
            <person name="Gilbert J.G.R."/>
            <person name="Clamp M.E."/>
            <person name="Bethel G."/>
            <person name="Milne S."/>
            <person name="Ainscough R."/>
            <person name="Almeida J.P."/>
            <person name="Ambrose K.D."/>
            <person name="Andrews T.D."/>
            <person name="Ashwell R.I.S."/>
            <person name="Babbage A.K."/>
            <person name="Bagguley C.L."/>
            <person name="Bailey J."/>
            <person name="Banerjee R."/>
            <person name="Barker D.J."/>
            <person name="Barlow K.F."/>
            <person name="Bates K."/>
            <person name="Beare D.M."/>
            <person name="Beasley H."/>
            <person name="Beasley O."/>
            <person name="Bird C.P."/>
            <person name="Blakey S.E."/>
            <person name="Bray-Allen S."/>
            <person name="Brook J."/>
            <person name="Brown A.J."/>
            <person name="Brown J.Y."/>
            <person name="Burford D.C."/>
            <person name="Burrill W."/>
            <person name="Burton J."/>
            <person name="Carder C."/>
            <person name="Carter N.P."/>
            <person name="Chapman J.C."/>
            <person name="Clark S.Y."/>
            <person name="Clark G."/>
            <person name="Clee C.M."/>
            <person name="Clegg S."/>
            <person name="Cobley V."/>
            <person name="Collier R.E."/>
            <person name="Collins J.E."/>
            <person name="Colman L.K."/>
            <person name="Corby N.R."/>
            <person name="Coville G.J."/>
            <person name="Culley K.M."/>
            <person name="Dhami P."/>
            <person name="Davies J."/>
            <person name="Dunn M."/>
            <person name="Earthrowl M.E."/>
            <person name="Ellington A.E."/>
            <person name="Evans K.A."/>
            <person name="Faulkner L."/>
            <person name="Francis M.D."/>
            <person name="Frankish A."/>
            <person name="Frankland J."/>
            <person name="French L."/>
            <person name="Garner P."/>
            <person name="Garnett J."/>
            <person name="Ghori M.J."/>
            <person name="Gilby L.M."/>
            <person name="Gillson C.J."/>
            <person name="Glithero R.J."/>
            <person name="Grafham D.V."/>
            <person name="Grant M."/>
            <person name="Gribble S."/>
            <person name="Griffiths C."/>
            <person name="Griffiths M.N.D."/>
            <person name="Hall R."/>
            <person name="Halls K.S."/>
            <person name="Hammond S."/>
            <person name="Harley J.L."/>
            <person name="Hart E.A."/>
            <person name="Heath P.D."/>
            <person name="Heathcott R."/>
            <person name="Holmes S.J."/>
            <person name="Howden P.J."/>
            <person name="Howe K.L."/>
            <person name="Howell G.R."/>
            <person name="Huckle E."/>
            <person name="Humphray S.J."/>
            <person name="Humphries M.D."/>
            <person name="Hunt A.R."/>
            <person name="Johnson C.M."/>
            <person name="Joy A.A."/>
            <person name="Kay M."/>
            <person name="Keenan S.J."/>
            <person name="Kimberley A.M."/>
            <person name="King A."/>
            <person name="Laird G.K."/>
            <person name="Langford C."/>
            <person name="Lawlor S."/>
            <person name="Leongamornlert D.A."/>
            <person name="Leversha M."/>
            <person name="Lloyd C.R."/>
            <person name="Lloyd D.M."/>
            <person name="Loveland J.E."/>
            <person name="Lovell J."/>
            <person name="Martin S."/>
            <person name="Mashreghi-Mohammadi M."/>
            <person name="Maslen G.L."/>
            <person name="Matthews L."/>
            <person name="McCann O.T."/>
            <person name="McLaren S.J."/>
            <person name="McLay K."/>
            <person name="McMurray A."/>
            <person name="Moore M.J.F."/>
            <person name="Mullikin J.C."/>
            <person name="Niblett D."/>
            <person name="Nickerson T."/>
            <person name="Novik K.L."/>
            <person name="Oliver K."/>
            <person name="Overton-Larty E.K."/>
            <person name="Parker A."/>
            <person name="Patel R."/>
            <person name="Pearce A.V."/>
            <person name="Peck A.I."/>
            <person name="Phillimore B.J.C.T."/>
            <person name="Phillips S."/>
            <person name="Plumb R.W."/>
            <person name="Porter K.M."/>
            <person name="Ramsey Y."/>
            <person name="Ranby S.A."/>
            <person name="Rice C.M."/>
            <person name="Ross M.T."/>
            <person name="Searle S.M."/>
            <person name="Sehra H.K."/>
            <person name="Sheridan E."/>
            <person name="Skuce C.D."/>
            <person name="Smith S."/>
            <person name="Smith M."/>
            <person name="Spraggon L."/>
            <person name="Squares S.L."/>
            <person name="Steward C.A."/>
            <person name="Sycamore N."/>
            <person name="Tamlyn-Hall G."/>
            <person name="Tester J."/>
            <person name="Theaker A.J."/>
            <person name="Thomas D.W."/>
            <person name="Thorpe A."/>
            <person name="Tracey A."/>
            <person name="Tromans A."/>
            <person name="Tubby B."/>
            <person name="Wall M."/>
            <person name="Wallis J.M."/>
            <person name="West A.P."/>
            <person name="White S.S."/>
            <person name="Whitehead S.L."/>
            <person name="Whittaker H."/>
            <person name="Wild A."/>
            <person name="Willey D.J."/>
            <person name="Wilmer T.E."/>
            <person name="Wood J.M."/>
            <person name="Wray P.W."/>
            <person name="Wyatt J.C."/>
            <person name="Young L."/>
            <person name="Younger R.M."/>
            <person name="Bentley D.R."/>
            <person name="Coulson A."/>
            <person name="Durbin R.M."/>
            <person name="Hubbard T."/>
            <person name="Sulston J.E."/>
            <person name="Dunham I."/>
            <person name="Rogers J."/>
            <person name="Beck S."/>
        </authorList>
    </citation>
    <scope>NUCLEOTIDE SEQUENCE [LARGE SCALE GENOMIC DNA]</scope>
</reference>
<reference key="5">
    <citation type="journal article" date="2004" name="Genome Res.">
        <title>The status, quality, and expansion of the NIH full-length cDNA project: the Mammalian Gene Collection (MGC).</title>
        <authorList>
            <consortium name="The MGC Project Team"/>
        </authorList>
    </citation>
    <scope>NUCLEOTIDE SEQUENCE [LARGE SCALE MRNA] (ISOFORM 1)</scope>
    <scope>VARIANT ILE-106</scope>
</reference>
<reference key="6">
    <citation type="journal article" date="1996" name="J. Exp. Med.">
        <title>Regulation of pre-T cell receptor (pT alpha-TCR beta) gene expression during human thymic development.</title>
        <authorList>
            <person name="Ramiro A.R."/>
            <person name="Trigueros C."/>
            <person name="Marquez C."/>
            <person name="San Millan J.L."/>
            <person name="Toribio M.L."/>
        </authorList>
    </citation>
    <scope>NUCLEOTIDE SEQUENCE [MRNA] OF 13-281 (ISOFORM 1)</scope>
    <scope>SUBUNIT</scope>
    <scope>TISSUE SPECIFICITY</scope>
    <scope>DEVELOPMENTAL STAGE</scope>
    <source>
        <tissue>Thymus</tissue>
    </source>
</reference>
<reference key="7">
    <citation type="journal article" date="2012" name="Mol. Cell">
        <title>Ubiquitin-dependent intramembrane rhomboid protease promotes ERAD of membrane proteins.</title>
        <authorList>
            <person name="Fleig L."/>
            <person name="Bergbold N."/>
            <person name="Sahasrabudhe P."/>
            <person name="Geiger B."/>
            <person name="Kaltak L."/>
            <person name="Lemberg M.K."/>
        </authorList>
    </citation>
    <scope>INTERACTION WITH RHBDD1</scope>
</reference>
<reference key="8">
    <citation type="journal article" date="2010" name="Nature">
        <title>The structural basis for autonomous dimerization of the pre-T-cell antigen receptor.</title>
        <authorList>
            <person name="Pang S.S."/>
            <person name="Berry R."/>
            <person name="Chen Z."/>
            <person name="Kjer-Nielsen L."/>
            <person name="Perugini M.A."/>
            <person name="King G.F."/>
            <person name="Wang C."/>
            <person name="Chew S.H."/>
            <person name="La Gruta N.L."/>
            <person name="Williams N.K."/>
            <person name="Beddoe T."/>
            <person name="Tiganis T."/>
            <person name="Cowieson N.P."/>
            <person name="Godfrey D.I."/>
            <person name="Purcell A.W."/>
            <person name="Wilce M.C."/>
            <person name="McCluskey J."/>
            <person name="Rossjohn J."/>
        </authorList>
    </citation>
    <scope>X-RAY CRYSTALLOGRAPHY (2.8 ANGSTROMS) OF 17-135</scope>
    <scope>SUBUNIT</scope>
    <scope>DISULFIDE BOND</scope>
    <scope>GLYCOSYLATION AT ASN-67</scope>
</reference>
<reference key="9">
    <citation type="journal article" date="2024" name="Science">
        <title>The immunopathological landscape of human pre-TCRalpha deficiency: From rare to common variants.</title>
        <authorList>
            <person name="Materna M."/>
            <person name="Delmonte O.M."/>
            <person name="Bosticardo M."/>
            <person name="Momenilandi M."/>
            <person name="Conrey P.E."/>
            <person name="Charmeteau-De Muylder B."/>
            <person name="Bravetti C."/>
            <person name="Bellworthy R."/>
            <person name="Cederholm A."/>
            <person name="Staels F."/>
            <person name="Ganoza C.A."/>
            <person name="Darko S."/>
            <person name="Sayed S."/>
            <person name="Le Floc'h C."/>
            <person name="Ogishi M."/>
            <person name="Rinchai D."/>
            <person name="Guenoun A."/>
            <person name="Bolze A."/>
            <person name="Khan T."/>
            <person name="Gervais A."/>
            <person name="Krueger R."/>
            <person name="Voeller M."/>
            <person name="Palterer B."/>
            <person name="Sadeghi-Shabestari M."/>
            <person name="Langlois de Septenville A."/>
            <person name="Schramm C.A."/>
            <person name="Shah S."/>
            <person name="Tello-Cajiao J.J."/>
            <person name="Pala F."/>
            <person name="Amini K."/>
            <person name="Campos J.S."/>
            <person name="Lima N.S."/>
            <person name="Eriksson D."/>
            <person name="Levy R."/>
            <person name="Seeleuthner Y."/>
            <person name="Jyonouchi S."/>
            <person name="Ata M."/>
            <person name="Al Ali F."/>
            <person name="Stittrich A."/>
            <person name="Deswarte C."/>
            <person name="Pereira A."/>
            <person name="Megret J."/>
            <person name="Le Voyer T."/>
            <person name="Bastard P."/>
            <person name="Berteloot L."/>
            <person name="Dussiot M."/>
            <person name="Vladikine N."/>
            <person name="Cardenas P.P."/>
            <person name="Jouanguy E."/>
            <person name="Alqahtani M."/>
            <person name="Hasan A."/>
            <person name="Thanaraj T.A."/>
            <person name="Rosain J."/>
            <person name="Al Qureshah F."/>
            <person name="Sabato V."/>
            <person name="Alyanakian M.A."/>
            <person name="Leruez-Ville M."/>
            <person name="Rozenberg F."/>
            <person name="Haddad E."/>
            <person name="Regueiro J.R."/>
            <person name="Toribio M.L."/>
            <person name="Kelsen J.R."/>
            <person name="Salehi M."/>
            <person name="Nasiri S."/>
            <person name="Torabizadeh M."/>
            <person name="Rokni-Zadeh H."/>
            <person name="Changi-Ashtiani M."/>
            <person name="Vatandoost N."/>
            <person name="Moravej H."/>
            <person name="Akrami S.M."/>
            <person name="Mazloomrezaei M."/>
            <person name="Cobat A."/>
            <person name="Meyts I."/>
            <person name="Toyofuku E."/>
            <person name="Nishimura M."/>
            <person name="Moriya K."/>
            <person name="Mizukami T."/>
            <person name="Imai K."/>
            <person name="Abel L."/>
            <person name="Malissen B."/>
            <person name="Al-Mulla F."/>
            <person name="Alkuraya F.S."/>
            <person name="Parvaneh N."/>
            <person name="von Bernuth H."/>
            <person name="Beetz C."/>
            <person name="Davi F."/>
            <person name="Douek D.C."/>
            <person name="Cheynier R."/>
            <person name="Langlais D."/>
            <person name="Landegren N."/>
            <person name="Marr N."/>
            <person name="Morio T."/>
            <person name="Shahrooei M."/>
            <person name="Schrijvers R."/>
            <person name="Henrickson S.E."/>
            <person name="Luche H."/>
            <person name="Notarangelo L.D."/>
            <person name="Casanova J.L."/>
            <person name="Beziat V."/>
        </authorList>
    </citation>
    <scope>VARIANTS 14-CYS--ALA-281 DEL; ARG-20; ALA-51; CYS-76; ILE-106; LEU-124; 149-TRP--ALA-281 DEL; THR-183; GLN-189; SER-192; GLN-227; GLU-230; ARG-252 AND THR-281</scope>
    <scope>CHARACTERIZATION OF VARIANTS 14-CYS--ALA-281 DEL; ARG-20; ALA-51; CYS-76; ILE-106; LEU-124; 149-TRP--ALA-281 DEL; THR-183; GLN-189; SER-192; GLN-227; GLU-230; ARG-252 AND THR-281</scope>
    <scope>INVOLVEMENT IN IMD126</scope>
    <scope>SUBCELLULAR LOCATION</scope>
    <scope>FUNCTION</scope>
</reference>